<evidence type="ECO:0000250" key="1"/>
<evidence type="ECO:0000255" key="2"/>
<evidence type="ECO:0000255" key="3">
    <source>
        <dbReference type="PROSITE-ProRule" id="PRU00836"/>
    </source>
</evidence>
<evidence type="ECO:0000256" key="4">
    <source>
        <dbReference type="SAM" id="MobiDB-lite"/>
    </source>
</evidence>
<evidence type="ECO:0000305" key="5"/>
<proteinExistence type="inferred from homology"/>
<reference key="1">
    <citation type="journal article" date="2009" name="Genome Res.">
        <title>Comparative genomic analyses of the human fungal pathogens Coccidioides and their relatives.</title>
        <authorList>
            <person name="Sharpton T.J."/>
            <person name="Stajich J.E."/>
            <person name="Rounsley S.D."/>
            <person name="Gardner M.J."/>
            <person name="Wortman J.R."/>
            <person name="Jordar V.S."/>
            <person name="Maiti R."/>
            <person name="Kodira C.D."/>
            <person name="Neafsey D.E."/>
            <person name="Zeng Q."/>
            <person name="Hung C.-Y."/>
            <person name="McMahan C."/>
            <person name="Muszewska A."/>
            <person name="Grynberg M."/>
            <person name="Mandel M.A."/>
            <person name="Kellner E.M."/>
            <person name="Barker B.M."/>
            <person name="Galgiani J.N."/>
            <person name="Orbach M.J."/>
            <person name="Kirkland T.N."/>
            <person name="Cole G.T."/>
            <person name="Henn M.R."/>
            <person name="Birren B.W."/>
            <person name="Taylor J.W."/>
        </authorList>
    </citation>
    <scope>NUCLEOTIDE SEQUENCE [LARGE SCALE GENOMIC DNA]</scope>
    <source>
        <strain>UAMH 1704</strain>
    </source>
</reference>
<gene>
    <name type="primary">RCF1</name>
    <name type="synonym">AIM31</name>
    <name type="ORF">UREG_02747</name>
</gene>
<comment type="function">
    <text evidence="1">Cytochrome c oxidase subunit which plays a role in assembly of respiratory supercomplexes.</text>
</comment>
<comment type="subunit">
    <text evidence="1">Associates with the respiratory chain complex III/complex IV supercomplex.</text>
</comment>
<comment type="subcellular location">
    <subcellularLocation>
        <location evidence="3">Mitochondrion membrane</location>
        <topology evidence="3">Multi-pass membrane protein</topology>
    </subcellularLocation>
</comment>
<comment type="similarity">
    <text evidence="5">Belongs to the RCF1 family.</text>
</comment>
<keyword id="KW-0175">Coiled coil</keyword>
<keyword id="KW-0472">Membrane</keyword>
<keyword id="KW-0496">Mitochondrion</keyword>
<keyword id="KW-1185">Reference proteome</keyword>
<keyword id="KW-0812">Transmembrane</keyword>
<keyword id="KW-1133">Transmembrane helix</keyword>
<accession>C4JHR1</accession>
<feature type="chain" id="PRO_0000399662" description="Respiratory supercomplex factor 1, mitochondrial">
    <location>
        <begin position="1"/>
        <end position="185"/>
    </location>
</feature>
<feature type="transmembrane region" description="Helical" evidence="3">
    <location>
        <begin position="16"/>
        <end position="33"/>
    </location>
</feature>
<feature type="transmembrane region" description="Helical" evidence="3">
    <location>
        <begin position="75"/>
        <end position="92"/>
    </location>
</feature>
<feature type="domain" description="HIG1" evidence="3">
    <location>
        <begin position="12"/>
        <end position="103"/>
    </location>
</feature>
<feature type="region of interest" description="Disordered" evidence="4">
    <location>
        <begin position="128"/>
        <end position="185"/>
    </location>
</feature>
<feature type="coiled-coil region" evidence="2">
    <location>
        <begin position="92"/>
        <end position="117"/>
    </location>
</feature>
<feature type="compositionally biased region" description="Basic and acidic residues" evidence="4">
    <location>
        <begin position="128"/>
        <end position="154"/>
    </location>
</feature>
<protein>
    <recommendedName>
        <fullName>Respiratory supercomplex factor 1, mitochondrial</fullName>
    </recommendedName>
</protein>
<name>RCF1_UNCRE</name>
<organism>
    <name type="scientific">Uncinocarpus reesii (strain UAMH 1704)</name>
    <dbReference type="NCBI Taxonomy" id="336963"/>
    <lineage>
        <taxon>Eukaryota</taxon>
        <taxon>Fungi</taxon>
        <taxon>Dikarya</taxon>
        <taxon>Ascomycota</taxon>
        <taxon>Pezizomycotina</taxon>
        <taxon>Eurotiomycetes</taxon>
        <taxon>Eurotiomycetidae</taxon>
        <taxon>Onygenales</taxon>
        <taxon>Onygenaceae</taxon>
        <taxon>Uncinocarpus</taxon>
    </lineage>
</organism>
<sequence length="185" mass="20782">MSDRPLPSSFDPYNSYLLRILLCSVLPVQFLAVHELITRPIPAGCLATSYALLRAYKSMKAGDSAQLNRMFRFRIYAQAFTLLAGVGGGFYYQAERAQRKELERAVADKKAQAKRDAWLRELEIRDQEDREWRERHEAVGKAAKEAGNKPKEANLDAPKVPTKESEEAKPTGGILDAVKSLGKEK</sequence>
<dbReference type="EMBL" id="CH476615">
    <property type="protein sequence ID" value="EEP77898.1"/>
    <property type="molecule type" value="Genomic_DNA"/>
</dbReference>
<dbReference type="RefSeq" id="XP_002543231.1">
    <property type="nucleotide sequence ID" value="XM_002543185.1"/>
</dbReference>
<dbReference type="STRING" id="336963.C4JHR1"/>
<dbReference type="GeneID" id="8437534"/>
<dbReference type="KEGG" id="ure:UREG_02747"/>
<dbReference type="VEuPathDB" id="FungiDB:UREG_02747"/>
<dbReference type="eggNOG" id="KOG4431">
    <property type="taxonomic scope" value="Eukaryota"/>
</dbReference>
<dbReference type="HOGENOM" id="CLU_087356_0_2_1"/>
<dbReference type="InParanoid" id="C4JHR1"/>
<dbReference type="OrthoDB" id="6604018at2759"/>
<dbReference type="Proteomes" id="UP000002058">
    <property type="component" value="Unassembled WGS sequence"/>
</dbReference>
<dbReference type="GO" id="GO:0031966">
    <property type="term" value="C:mitochondrial membrane"/>
    <property type="evidence" value="ECO:0007669"/>
    <property type="project" value="UniProtKB-SubCell"/>
</dbReference>
<dbReference type="GO" id="GO:0097250">
    <property type="term" value="P:mitochondrial respirasome assembly"/>
    <property type="evidence" value="ECO:0007669"/>
    <property type="project" value="TreeGrafter"/>
</dbReference>
<dbReference type="InterPro" id="IPR007667">
    <property type="entry name" value="Hypoxia_induced_domain"/>
</dbReference>
<dbReference type="InterPro" id="IPR050355">
    <property type="entry name" value="RCF1"/>
</dbReference>
<dbReference type="PANTHER" id="PTHR12297:SF3">
    <property type="entry name" value="HIG1 DOMAIN FAMILY MEMBER 1A"/>
    <property type="match status" value="1"/>
</dbReference>
<dbReference type="PANTHER" id="PTHR12297">
    <property type="entry name" value="HYPOXIA-INDUCBILE GENE 1 HIG1 -RELATED"/>
    <property type="match status" value="1"/>
</dbReference>
<dbReference type="Pfam" id="PF04588">
    <property type="entry name" value="HIG_1_N"/>
    <property type="match status" value="1"/>
</dbReference>
<dbReference type="PROSITE" id="PS51503">
    <property type="entry name" value="HIG1"/>
    <property type="match status" value="1"/>
</dbReference>